<reference key="1">
    <citation type="submission" date="2006-10" db="EMBL/GenBank/DDBJ databases">
        <authorList>
            <person name="Fleischmann R.D."/>
            <person name="Dodson R.J."/>
            <person name="Haft D.H."/>
            <person name="Merkel J.S."/>
            <person name="Nelson W.C."/>
            <person name="Fraser C.M."/>
        </authorList>
    </citation>
    <scope>NUCLEOTIDE SEQUENCE [LARGE SCALE GENOMIC DNA]</scope>
    <source>
        <strain>104</strain>
    </source>
</reference>
<proteinExistence type="inferred from homology"/>
<gene>
    <name evidence="2" type="primary">rpsL</name>
    <name type="ordered locus">MAV_4492</name>
</gene>
<organism>
    <name type="scientific">Mycobacterium avium (strain 104)</name>
    <dbReference type="NCBI Taxonomy" id="243243"/>
    <lineage>
        <taxon>Bacteria</taxon>
        <taxon>Bacillati</taxon>
        <taxon>Actinomycetota</taxon>
        <taxon>Actinomycetes</taxon>
        <taxon>Mycobacteriales</taxon>
        <taxon>Mycobacteriaceae</taxon>
        <taxon>Mycobacterium</taxon>
        <taxon>Mycobacterium avium complex (MAC)</taxon>
    </lineage>
</organism>
<feature type="chain" id="PRO_0000295999" description="Small ribosomal subunit protein uS12">
    <location>
        <begin position="1"/>
        <end position="124"/>
    </location>
</feature>
<feature type="region of interest" description="Disordered" evidence="3">
    <location>
        <begin position="105"/>
        <end position="124"/>
    </location>
</feature>
<feature type="compositionally biased region" description="Basic residues" evidence="3">
    <location>
        <begin position="108"/>
        <end position="118"/>
    </location>
</feature>
<feature type="modified residue" description="3-methylthioaspartic acid" evidence="1">
    <location>
        <position position="89"/>
    </location>
</feature>
<protein>
    <recommendedName>
        <fullName evidence="2">Small ribosomal subunit protein uS12</fullName>
    </recommendedName>
    <alternativeName>
        <fullName evidence="4">30S ribosomal protein S12</fullName>
    </alternativeName>
</protein>
<accession>A0QL38</accession>
<comment type="function">
    <text evidence="2">With S4 and S5 plays an important role in translational accuracy.</text>
</comment>
<comment type="function">
    <text evidence="2">Interacts with and stabilizes bases of the 16S rRNA that are involved in tRNA selection in the A site and with the mRNA backbone. Located at the interface of the 30S and 50S subunits, it traverses the body of the 30S subunit contacting proteins on the other side and probably holding the rRNA structure together. The combined cluster of proteins S8, S12 and S17 appears to hold together the shoulder and platform of the 30S subunit.</text>
</comment>
<comment type="subunit">
    <text evidence="2">Part of the 30S ribosomal subunit. Contacts proteins S8 and S17. May interact with IF1 in the 30S initiation complex.</text>
</comment>
<comment type="similarity">
    <text evidence="2">Belongs to the universal ribosomal protein uS12 family.</text>
</comment>
<keyword id="KW-0488">Methylation</keyword>
<keyword id="KW-0687">Ribonucleoprotein</keyword>
<keyword id="KW-0689">Ribosomal protein</keyword>
<keyword id="KW-0694">RNA-binding</keyword>
<keyword id="KW-0699">rRNA-binding</keyword>
<keyword id="KW-0820">tRNA-binding</keyword>
<evidence type="ECO:0000250" key="1"/>
<evidence type="ECO:0000255" key="2">
    <source>
        <dbReference type="HAMAP-Rule" id="MF_00403"/>
    </source>
</evidence>
<evidence type="ECO:0000256" key="3">
    <source>
        <dbReference type="SAM" id="MobiDB-lite"/>
    </source>
</evidence>
<evidence type="ECO:0000305" key="4"/>
<dbReference type="EMBL" id="CP000479">
    <property type="protein sequence ID" value="ABK68750.1"/>
    <property type="molecule type" value="Genomic_DNA"/>
</dbReference>
<dbReference type="RefSeq" id="WP_003879423.1">
    <property type="nucleotide sequence ID" value="NC_008595.1"/>
</dbReference>
<dbReference type="SMR" id="A0QL38"/>
<dbReference type="GeneID" id="93493130"/>
<dbReference type="KEGG" id="mav:MAV_4492"/>
<dbReference type="HOGENOM" id="CLU_104295_1_2_11"/>
<dbReference type="Proteomes" id="UP000001574">
    <property type="component" value="Chromosome"/>
</dbReference>
<dbReference type="GO" id="GO:0015935">
    <property type="term" value="C:small ribosomal subunit"/>
    <property type="evidence" value="ECO:0007669"/>
    <property type="project" value="InterPro"/>
</dbReference>
<dbReference type="GO" id="GO:0019843">
    <property type="term" value="F:rRNA binding"/>
    <property type="evidence" value="ECO:0007669"/>
    <property type="project" value="UniProtKB-UniRule"/>
</dbReference>
<dbReference type="GO" id="GO:0003735">
    <property type="term" value="F:structural constituent of ribosome"/>
    <property type="evidence" value="ECO:0007669"/>
    <property type="project" value="InterPro"/>
</dbReference>
<dbReference type="GO" id="GO:0000049">
    <property type="term" value="F:tRNA binding"/>
    <property type="evidence" value="ECO:0007669"/>
    <property type="project" value="UniProtKB-UniRule"/>
</dbReference>
<dbReference type="GO" id="GO:0006412">
    <property type="term" value="P:translation"/>
    <property type="evidence" value="ECO:0007669"/>
    <property type="project" value="UniProtKB-UniRule"/>
</dbReference>
<dbReference type="CDD" id="cd03368">
    <property type="entry name" value="Ribosomal_S12"/>
    <property type="match status" value="1"/>
</dbReference>
<dbReference type="FunFam" id="2.40.50.140:FF:000001">
    <property type="entry name" value="30S ribosomal protein S12"/>
    <property type="match status" value="1"/>
</dbReference>
<dbReference type="Gene3D" id="2.40.50.140">
    <property type="entry name" value="Nucleic acid-binding proteins"/>
    <property type="match status" value="1"/>
</dbReference>
<dbReference type="HAMAP" id="MF_00403_B">
    <property type="entry name" value="Ribosomal_uS12_B"/>
    <property type="match status" value="1"/>
</dbReference>
<dbReference type="InterPro" id="IPR012340">
    <property type="entry name" value="NA-bd_OB-fold"/>
</dbReference>
<dbReference type="InterPro" id="IPR006032">
    <property type="entry name" value="Ribosomal_uS12"/>
</dbReference>
<dbReference type="InterPro" id="IPR005679">
    <property type="entry name" value="Ribosomal_uS12_bac"/>
</dbReference>
<dbReference type="NCBIfam" id="TIGR00981">
    <property type="entry name" value="rpsL_bact"/>
    <property type="match status" value="1"/>
</dbReference>
<dbReference type="PANTHER" id="PTHR11652">
    <property type="entry name" value="30S RIBOSOMAL PROTEIN S12 FAMILY MEMBER"/>
    <property type="match status" value="1"/>
</dbReference>
<dbReference type="Pfam" id="PF00164">
    <property type="entry name" value="Ribosom_S12_S23"/>
    <property type="match status" value="1"/>
</dbReference>
<dbReference type="PIRSF" id="PIRSF002133">
    <property type="entry name" value="Ribosomal_S12/S23"/>
    <property type="match status" value="1"/>
</dbReference>
<dbReference type="PRINTS" id="PR01034">
    <property type="entry name" value="RIBOSOMALS12"/>
</dbReference>
<dbReference type="SUPFAM" id="SSF50249">
    <property type="entry name" value="Nucleic acid-binding proteins"/>
    <property type="match status" value="1"/>
</dbReference>
<dbReference type="PROSITE" id="PS00055">
    <property type="entry name" value="RIBOSOMAL_S12"/>
    <property type="match status" value="1"/>
</dbReference>
<name>RS12_MYCA1</name>
<sequence length="124" mass="13849">MPTIQQLVRKGRRDKIGKVKTAALKGSPQRRGVCTRVYTTTPKKPNSALRKVARVKLTSQVEVTAYIPGEGHNLQEHSMVLVRGGRVKDLPGVRYKIIRGSLDTQGVKNRKQARSRYGAKKEKS</sequence>